<evidence type="ECO:0000305" key="1"/>
<feature type="chain" id="PRO_0000066082" description="Uncharacterized 21.2 kDa protein">
    <location>
        <begin position="1"/>
        <end position="183"/>
    </location>
</feature>
<feature type="sequence conflict" description="In Ref. 1; AL113598." evidence="1" ref="1">
    <original>V</original>
    <variation>F</variation>
    <location>
        <position position="173"/>
    </location>
</feature>
<feature type="sequence conflict" description="In Ref. 1; AL113598." evidence="1" ref="1">
    <original>H</original>
    <variation>Q</variation>
    <location>
        <position position="183"/>
    </location>
</feature>
<protein>
    <recommendedName>
        <fullName>Uncharacterized 21.2 kDa protein</fullName>
    </recommendedName>
</protein>
<accession>P56739</accession>
<name>Y212_BOTFU</name>
<comment type="similarity">
    <text evidence="1">To A.muscaria DOPA 4,5-dioxygenase.</text>
</comment>
<reference key="1">
    <citation type="submission" date="1999-09" db="EMBL/GenBank/DDBJ databases">
        <authorList>
            <person name="Bitton F."/>
            <person name="Levis C."/>
            <person name="Fortini D."/>
            <person name="Pradier J.M."/>
            <person name="Brygoo Y."/>
        </authorList>
    </citation>
    <scope>NUCLEOTIDE SEQUENCE [MRNA]</scope>
    <source>
        <strain>T4</strain>
    </source>
</reference>
<organism>
    <name type="scientific">Botryotinia fuckeliana</name>
    <name type="common">Noble rot fungus</name>
    <name type="synonym">Botrytis cinerea</name>
    <dbReference type="NCBI Taxonomy" id="40559"/>
    <lineage>
        <taxon>Eukaryota</taxon>
        <taxon>Fungi</taxon>
        <taxon>Dikarya</taxon>
        <taxon>Ascomycota</taxon>
        <taxon>Pezizomycotina</taxon>
        <taxon>Leotiomycetes</taxon>
        <taxon>Helotiales</taxon>
        <taxon>Sclerotiniaceae</taxon>
        <taxon>Botrytis</taxon>
    </lineage>
</organism>
<dbReference type="EMBL" id="AL113213">
    <property type="status" value="NOT_ANNOTATED_CDS"/>
    <property type="molecule type" value="mRNA"/>
</dbReference>
<dbReference type="EMBL" id="AL113598">
    <property type="status" value="NOT_ANNOTATED_CDS"/>
    <property type="molecule type" value="mRNA"/>
</dbReference>
<dbReference type="SMR" id="P56739"/>
<dbReference type="Gene3D" id="3.30.70.1240">
    <property type="entry name" value="DOPA-like domains"/>
    <property type="match status" value="1"/>
</dbReference>
<dbReference type="InterPro" id="IPR023389">
    <property type="entry name" value="DOPA-like_sf"/>
</dbReference>
<dbReference type="InterPro" id="IPR014980">
    <property type="entry name" value="DOPA_dioxygen"/>
</dbReference>
<dbReference type="PANTHER" id="PTHR36423">
    <property type="entry name" value="AFR070WP"/>
    <property type="match status" value="1"/>
</dbReference>
<dbReference type="PANTHER" id="PTHR36423:SF2">
    <property type="entry name" value="AFR070WP"/>
    <property type="match status" value="1"/>
</dbReference>
<dbReference type="Pfam" id="PF08883">
    <property type="entry name" value="DOPA_dioxygen"/>
    <property type="match status" value="1"/>
</dbReference>
<dbReference type="SUPFAM" id="SSF143410">
    <property type="entry name" value="DOPA-like"/>
    <property type="match status" value="1"/>
</dbReference>
<proteinExistence type="evidence at transcript level"/>
<sequence>MADPSLYTYPSPLQGYENLAPLGTEVSPDGKSLLNPETGIKSKSYEKFTEPLDSGIRGAFDVHIYHFQKNKEQAKFARELWERIRREFPELRIYRFWEEPIGPHPVAMFEVNLFTPEQFGAFIPWLVINRGPLSALVHPNTVDEKGELLDEERDHTQRAIWMGEQLPLDLSLVKRLKQQKAAH</sequence>